<protein>
    <recommendedName>
        <fullName>Antitoxin YefM</fullName>
    </recommendedName>
    <alternativeName>
        <fullName>ORFU1E</fullName>
    </alternativeName>
</protein>
<name>YEFM_STRCO</name>
<keyword id="KW-1185">Reference proteome</keyword>
<keyword id="KW-1277">Toxin-antitoxin system</keyword>
<gene>
    <name type="ordered locus">SCO2235</name>
    <name type="ORF">SCBAC17D6.02</name>
</gene>
<reference key="1">
    <citation type="journal article" date="1999" name="Microbiology">
        <title>Nitrogen metabolism in Streptomyces coelicolor A3(2): modification of glutamine synthetase I by an adenylyltransferase.</title>
        <authorList>
            <person name="Fink D."/>
            <person name="Falke D."/>
            <person name="Wohlleben W."/>
            <person name="Engels A."/>
        </authorList>
    </citation>
    <scope>NUCLEOTIDE SEQUENCE [GENOMIC DNA]</scope>
    <source>
        <strain>A3(2) / NRRL B-16638</strain>
    </source>
</reference>
<reference key="2">
    <citation type="journal article" date="2002" name="Nature">
        <title>Complete genome sequence of the model actinomycete Streptomyces coelicolor A3(2).</title>
        <authorList>
            <person name="Bentley S.D."/>
            <person name="Chater K.F."/>
            <person name="Cerdeno-Tarraga A.-M."/>
            <person name="Challis G.L."/>
            <person name="Thomson N.R."/>
            <person name="James K.D."/>
            <person name="Harris D.E."/>
            <person name="Quail M.A."/>
            <person name="Kieser H."/>
            <person name="Harper D."/>
            <person name="Bateman A."/>
            <person name="Brown S."/>
            <person name="Chandra G."/>
            <person name="Chen C.W."/>
            <person name="Collins M."/>
            <person name="Cronin A."/>
            <person name="Fraser A."/>
            <person name="Goble A."/>
            <person name="Hidalgo J."/>
            <person name="Hornsby T."/>
            <person name="Howarth S."/>
            <person name="Huang C.-H."/>
            <person name="Kieser T."/>
            <person name="Larke L."/>
            <person name="Murphy L.D."/>
            <person name="Oliver K."/>
            <person name="O'Neil S."/>
            <person name="Rabbinowitsch E."/>
            <person name="Rajandream M.A."/>
            <person name="Rutherford K.M."/>
            <person name="Rutter S."/>
            <person name="Seeger K."/>
            <person name="Saunders D."/>
            <person name="Sharp S."/>
            <person name="Squares R."/>
            <person name="Squares S."/>
            <person name="Taylor K."/>
            <person name="Warren T."/>
            <person name="Wietzorrek A."/>
            <person name="Woodward J.R."/>
            <person name="Barrell B.G."/>
            <person name="Parkhill J."/>
            <person name="Hopwood D.A."/>
        </authorList>
    </citation>
    <scope>NUCLEOTIDE SEQUENCE [LARGE SCALE GENOMIC DNA]</scope>
    <source>
        <strain>ATCC BAA-471 / A3(2) / M145</strain>
    </source>
</reference>
<feature type="chain" id="PRO_0000213743" description="Antitoxin YefM">
    <location>
        <begin position="1"/>
        <end position="87"/>
    </location>
</feature>
<sequence length="87" mass="9693">MSITASEARQNLFPLIEQVNEDHAPVHITSRKGNAVLMSEEDFTAWTETVHLLRSPRNARRLLDSIAEAEAGDATEHDLIDPDAERA</sequence>
<evidence type="ECO:0000250" key="1"/>
<evidence type="ECO:0000305" key="2"/>
<accession>Q9Z4V7</accession>
<comment type="function">
    <text evidence="1">Antitoxin component of a type II toxin-antitoxin (TA) system. A probable antitoxin for the putative mRNA interferase YeoB (By similarity).</text>
</comment>
<comment type="subunit">
    <text evidence="1">Forms a complex with YoeB which inhibits its toxin activity.</text>
</comment>
<comment type="similarity">
    <text evidence="2">Belongs to the phD/YefM antitoxin family.</text>
</comment>
<proteinExistence type="inferred from homology"/>
<dbReference type="EMBL" id="Y17736">
    <property type="protein sequence ID" value="CAB38327.1"/>
    <property type="molecule type" value="Genomic_DNA"/>
</dbReference>
<dbReference type="EMBL" id="AL939111">
    <property type="protein sequence ID" value="CAC37261.1"/>
    <property type="molecule type" value="Genomic_DNA"/>
</dbReference>
<dbReference type="PIR" id="T51758">
    <property type="entry name" value="T51758"/>
</dbReference>
<dbReference type="RefSeq" id="NP_626485.1">
    <property type="nucleotide sequence ID" value="NC_003888.3"/>
</dbReference>
<dbReference type="RefSeq" id="WP_003976578.1">
    <property type="nucleotide sequence ID" value="NZ_VNID01000001.1"/>
</dbReference>
<dbReference type="SMR" id="Q9Z4V7"/>
<dbReference type="FunCoup" id="Q9Z4V7">
    <property type="interactions" value="1"/>
</dbReference>
<dbReference type="STRING" id="100226.gene:17759832"/>
<dbReference type="PaxDb" id="100226-SCO2235"/>
<dbReference type="KEGG" id="sco:SCO2235"/>
<dbReference type="PATRIC" id="fig|100226.15.peg.2273"/>
<dbReference type="eggNOG" id="COG2161">
    <property type="taxonomic scope" value="Bacteria"/>
</dbReference>
<dbReference type="HOGENOM" id="CLU_155837_1_1_11"/>
<dbReference type="InParanoid" id="Q9Z4V7"/>
<dbReference type="OrthoDB" id="9802003at2"/>
<dbReference type="PhylomeDB" id="Q9Z4V7"/>
<dbReference type="Proteomes" id="UP000001973">
    <property type="component" value="Chromosome"/>
</dbReference>
<dbReference type="GO" id="GO:0003700">
    <property type="term" value="F:DNA-binding transcription factor activity"/>
    <property type="evidence" value="ECO:0000318"/>
    <property type="project" value="GO_Central"/>
</dbReference>
<dbReference type="GO" id="GO:0043565">
    <property type="term" value="F:sequence-specific DNA binding"/>
    <property type="evidence" value="ECO:0000318"/>
    <property type="project" value="GO_Central"/>
</dbReference>
<dbReference type="GO" id="GO:0006355">
    <property type="term" value="P:regulation of DNA-templated transcription"/>
    <property type="evidence" value="ECO:0000318"/>
    <property type="project" value="GO_Central"/>
</dbReference>
<dbReference type="Gene3D" id="1.10.1220.170">
    <property type="match status" value="1"/>
</dbReference>
<dbReference type="Gene3D" id="3.40.1620.10">
    <property type="entry name" value="YefM-like domain"/>
    <property type="match status" value="1"/>
</dbReference>
<dbReference type="InterPro" id="IPR006442">
    <property type="entry name" value="Antitoxin_Phd/YefM"/>
</dbReference>
<dbReference type="InterPro" id="IPR051405">
    <property type="entry name" value="phD/YefM_antitoxin"/>
</dbReference>
<dbReference type="InterPro" id="IPR036165">
    <property type="entry name" value="YefM-like_sf"/>
</dbReference>
<dbReference type="NCBIfam" id="TIGR01552">
    <property type="entry name" value="phd_fam"/>
    <property type="match status" value="1"/>
</dbReference>
<dbReference type="PANTHER" id="PTHR33713">
    <property type="entry name" value="ANTITOXIN YAFN-RELATED"/>
    <property type="match status" value="1"/>
</dbReference>
<dbReference type="PANTHER" id="PTHR33713:SF6">
    <property type="entry name" value="ANTITOXIN YEFM"/>
    <property type="match status" value="1"/>
</dbReference>
<dbReference type="Pfam" id="PF02604">
    <property type="entry name" value="PhdYeFM_antitox"/>
    <property type="match status" value="1"/>
</dbReference>
<dbReference type="SUPFAM" id="SSF143120">
    <property type="entry name" value="YefM-like"/>
    <property type="match status" value="1"/>
</dbReference>
<organism>
    <name type="scientific">Streptomyces coelicolor (strain ATCC BAA-471 / A3(2) / M145)</name>
    <dbReference type="NCBI Taxonomy" id="100226"/>
    <lineage>
        <taxon>Bacteria</taxon>
        <taxon>Bacillati</taxon>
        <taxon>Actinomycetota</taxon>
        <taxon>Actinomycetes</taxon>
        <taxon>Kitasatosporales</taxon>
        <taxon>Streptomycetaceae</taxon>
        <taxon>Streptomyces</taxon>
        <taxon>Streptomyces albidoflavus group</taxon>
    </lineage>
</organism>